<keyword id="KW-0687">Ribonucleoprotein</keyword>
<keyword id="KW-0689">Ribosomal protein</keyword>
<keyword id="KW-0694">RNA-binding</keyword>
<keyword id="KW-0699">rRNA-binding</keyword>
<keyword id="KW-0820">tRNA-binding</keyword>
<sequence>MLQPKRMKFRKMFKGRNRGLANGTEVSFGEFGLKAVGRGRLTARQIESARRAMTRHIKRQGQIWIRVFPDKPITSKPLEVRMGKGKGNVEYWVCQIQPGKVLYEMNGVSEELAREAFALAAAKLPLKTTFVTKTVM</sequence>
<protein>
    <recommendedName>
        <fullName evidence="1">Large ribosomal subunit protein uL16</fullName>
    </recommendedName>
    <alternativeName>
        <fullName evidence="2">50S ribosomal protein L16</fullName>
    </alternativeName>
</protein>
<dbReference type="EMBL" id="CP000472">
    <property type="protein sequence ID" value="ACJ28774.1"/>
    <property type="molecule type" value="Genomic_DNA"/>
</dbReference>
<dbReference type="RefSeq" id="WP_020912144.1">
    <property type="nucleotide sequence ID" value="NC_011566.1"/>
</dbReference>
<dbReference type="SMR" id="B8CNE0"/>
<dbReference type="STRING" id="225849.swp_2018"/>
<dbReference type="KEGG" id="swp:swp_2018"/>
<dbReference type="eggNOG" id="COG0197">
    <property type="taxonomic scope" value="Bacteria"/>
</dbReference>
<dbReference type="HOGENOM" id="CLU_078858_2_1_6"/>
<dbReference type="OrthoDB" id="9802589at2"/>
<dbReference type="Proteomes" id="UP000000753">
    <property type="component" value="Chromosome"/>
</dbReference>
<dbReference type="GO" id="GO:0022625">
    <property type="term" value="C:cytosolic large ribosomal subunit"/>
    <property type="evidence" value="ECO:0007669"/>
    <property type="project" value="TreeGrafter"/>
</dbReference>
<dbReference type="GO" id="GO:0019843">
    <property type="term" value="F:rRNA binding"/>
    <property type="evidence" value="ECO:0007669"/>
    <property type="project" value="UniProtKB-UniRule"/>
</dbReference>
<dbReference type="GO" id="GO:0003735">
    <property type="term" value="F:structural constituent of ribosome"/>
    <property type="evidence" value="ECO:0007669"/>
    <property type="project" value="InterPro"/>
</dbReference>
<dbReference type="GO" id="GO:0000049">
    <property type="term" value="F:tRNA binding"/>
    <property type="evidence" value="ECO:0007669"/>
    <property type="project" value="UniProtKB-KW"/>
</dbReference>
<dbReference type="GO" id="GO:0006412">
    <property type="term" value="P:translation"/>
    <property type="evidence" value="ECO:0007669"/>
    <property type="project" value="UniProtKB-UniRule"/>
</dbReference>
<dbReference type="CDD" id="cd01433">
    <property type="entry name" value="Ribosomal_L16_L10e"/>
    <property type="match status" value="1"/>
</dbReference>
<dbReference type="FunFam" id="3.90.1170.10:FF:000001">
    <property type="entry name" value="50S ribosomal protein L16"/>
    <property type="match status" value="1"/>
</dbReference>
<dbReference type="Gene3D" id="3.90.1170.10">
    <property type="entry name" value="Ribosomal protein L10e/L16"/>
    <property type="match status" value="1"/>
</dbReference>
<dbReference type="HAMAP" id="MF_01342">
    <property type="entry name" value="Ribosomal_uL16"/>
    <property type="match status" value="1"/>
</dbReference>
<dbReference type="InterPro" id="IPR047873">
    <property type="entry name" value="Ribosomal_uL16"/>
</dbReference>
<dbReference type="InterPro" id="IPR000114">
    <property type="entry name" value="Ribosomal_uL16_bact-type"/>
</dbReference>
<dbReference type="InterPro" id="IPR020798">
    <property type="entry name" value="Ribosomal_uL16_CS"/>
</dbReference>
<dbReference type="InterPro" id="IPR016180">
    <property type="entry name" value="Ribosomal_uL16_dom"/>
</dbReference>
<dbReference type="InterPro" id="IPR036920">
    <property type="entry name" value="Ribosomal_uL16_sf"/>
</dbReference>
<dbReference type="NCBIfam" id="TIGR01164">
    <property type="entry name" value="rplP_bact"/>
    <property type="match status" value="1"/>
</dbReference>
<dbReference type="PANTHER" id="PTHR12220">
    <property type="entry name" value="50S/60S RIBOSOMAL PROTEIN L16"/>
    <property type="match status" value="1"/>
</dbReference>
<dbReference type="PANTHER" id="PTHR12220:SF13">
    <property type="entry name" value="LARGE RIBOSOMAL SUBUNIT PROTEIN UL16M"/>
    <property type="match status" value="1"/>
</dbReference>
<dbReference type="Pfam" id="PF00252">
    <property type="entry name" value="Ribosomal_L16"/>
    <property type="match status" value="1"/>
</dbReference>
<dbReference type="PRINTS" id="PR00060">
    <property type="entry name" value="RIBOSOMALL16"/>
</dbReference>
<dbReference type="SUPFAM" id="SSF54686">
    <property type="entry name" value="Ribosomal protein L16p/L10e"/>
    <property type="match status" value="1"/>
</dbReference>
<dbReference type="PROSITE" id="PS00586">
    <property type="entry name" value="RIBOSOMAL_L16_1"/>
    <property type="match status" value="1"/>
</dbReference>
<dbReference type="PROSITE" id="PS00701">
    <property type="entry name" value="RIBOSOMAL_L16_2"/>
    <property type="match status" value="1"/>
</dbReference>
<name>RL16_SHEPW</name>
<evidence type="ECO:0000255" key="1">
    <source>
        <dbReference type="HAMAP-Rule" id="MF_01342"/>
    </source>
</evidence>
<evidence type="ECO:0000305" key="2"/>
<comment type="function">
    <text evidence="1">Binds 23S rRNA and is also seen to make contacts with the A and possibly P site tRNAs.</text>
</comment>
<comment type="subunit">
    <text evidence="1">Part of the 50S ribosomal subunit.</text>
</comment>
<comment type="similarity">
    <text evidence="1">Belongs to the universal ribosomal protein uL16 family.</text>
</comment>
<feature type="chain" id="PRO_1000143028" description="Large ribosomal subunit protein uL16">
    <location>
        <begin position="1"/>
        <end position="136"/>
    </location>
</feature>
<reference key="1">
    <citation type="journal article" date="2008" name="PLoS ONE">
        <title>Environmental adaptation: genomic analysis of the piezotolerant and psychrotolerant deep-sea iron reducing bacterium Shewanella piezotolerans WP3.</title>
        <authorList>
            <person name="Wang F."/>
            <person name="Wang J."/>
            <person name="Jian H."/>
            <person name="Zhang B."/>
            <person name="Li S."/>
            <person name="Wang F."/>
            <person name="Zeng X."/>
            <person name="Gao L."/>
            <person name="Bartlett D.H."/>
            <person name="Yu J."/>
            <person name="Hu S."/>
            <person name="Xiao X."/>
        </authorList>
    </citation>
    <scope>NUCLEOTIDE SEQUENCE [LARGE SCALE GENOMIC DNA]</scope>
    <source>
        <strain>WP3 / JCM 13877</strain>
    </source>
</reference>
<organism>
    <name type="scientific">Shewanella piezotolerans (strain WP3 / JCM 13877)</name>
    <dbReference type="NCBI Taxonomy" id="225849"/>
    <lineage>
        <taxon>Bacteria</taxon>
        <taxon>Pseudomonadati</taxon>
        <taxon>Pseudomonadota</taxon>
        <taxon>Gammaproteobacteria</taxon>
        <taxon>Alteromonadales</taxon>
        <taxon>Shewanellaceae</taxon>
        <taxon>Shewanella</taxon>
    </lineage>
</organism>
<gene>
    <name evidence="1" type="primary">rplP</name>
    <name type="ordered locus">swp_2018</name>
</gene>
<proteinExistence type="inferred from homology"/>
<accession>B8CNE0</accession>